<feature type="chain" id="PRO_0000359519" description="Uncharacterized MFS-type transporter YddS">
    <location>
        <begin position="1"/>
        <end position="436"/>
    </location>
</feature>
<feature type="transmembrane region" description="Helical" evidence="1">
    <location>
        <begin position="38"/>
        <end position="58"/>
    </location>
</feature>
<feature type="transmembrane region" description="Helical" evidence="1">
    <location>
        <begin position="70"/>
        <end position="90"/>
    </location>
</feature>
<feature type="transmembrane region" description="Helical" evidence="1">
    <location>
        <begin position="102"/>
        <end position="122"/>
    </location>
</feature>
<feature type="transmembrane region" description="Helical" evidence="1">
    <location>
        <begin position="125"/>
        <end position="145"/>
    </location>
</feature>
<feature type="transmembrane region" description="Helical" evidence="1">
    <location>
        <begin position="160"/>
        <end position="180"/>
    </location>
</feature>
<feature type="transmembrane region" description="Helical" evidence="1">
    <location>
        <begin position="197"/>
        <end position="217"/>
    </location>
</feature>
<feature type="transmembrane region" description="Helical" evidence="1">
    <location>
        <begin position="254"/>
        <end position="274"/>
    </location>
</feature>
<feature type="transmembrane region" description="Helical" evidence="1">
    <location>
        <begin position="291"/>
        <end position="311"/>
    </location>
</feature>
<feature type="transmembrane region" description="Helical" evidence="1">
    <location>
        <begin position="319"/>
        <end position="339"/>
    </location>
</feature>
<feature type="transmembrane region" description="Helical" evidence="1">
    <location>
        <begin position="342"/>
        <end position="362"/>
    </location>
</feature>
<feature type="transmembrane region" description="Helical" evidence="1">
    <location>
        <begin position="383"/>
        <end position="403"/>
    </location>
</feature>
<feature type="transmembrane region" description="Helical" evidence="1">
    <location>
        <begin position="409"/>
        <end position="429"/>
    </location>
</feature>
<keyword id="KW-1003">Cell membrane</keyword>
<keyword id="KW-0472">Membrane</keyword>
<keyword id="KW-1185">Reference proteome</keyword>
<keyword id="KW-0812">Transmembrane</keyword>
<keyword id="KW-1133">Transmembrane helix</keyword>
<keyword id="KW-0813">Transport</keyword>
<proteinExistence type="inferred from homology"/>
<evidence type="ECO:0000255" key="1"/>
<evidence type="ECO:0000305" key="2"/>
<name>YDDS_BACSU</name>
<reference key="1">
    <citation type="submission" date="1997-03" db="EMBL/GenBank/DDBJ databases">
        <title>A 148 kbp sequence of the region between 35 and 47 degree of the Bacillus subtilis genome.</title>
        <authorList>
            <person name="Kasahara Y."/>
            <person name="Nakai S."/>
            <person name="Lee S."/>
            <person name="Sadaie Y."/>
            <person name="Ogasawara N."/>
        </authorList>
    </citation>
    <scope>NUCLEOTIDE SEQUENCE [GENOMIC DNA]</scope>
    <source>
        <strain>168</strain>
    </source>
</reference>
<reference key="2">
    <citation type="journal article" date="1997" name="Nature">
        <title>The complete genome sequence of the Gram-positive bacterium Bacillus subtilis.</title>
        <authorList>
            <person name="Kunst F."/>
            <person name="Ogasawara N."/>
            <person name="Moszer I."/>
            <person name="Albertini A.M."/>
            <person name="Alloni G."/>
            <person name="Azevedo V."/>
            <person name="Bertero M.G."/>
            <person name="Bessieres P."/>
            <person name="Bolotin A."/>
            <person name="Borchert S."/>
            <person name="Borriss R."/>
            <person name="Boursier L."/>
            <person name="Brans A."/>
            <person name="Braun M."/>
            <person name="Brignell S.C."/>
            <person name="Bron S."/>
            <person name="Brouillet S."/>
            <person name="Bruschi C.V."/>
            <person name="Caldwell B."/>
            <person name="Capuano V."/>
            <person name="Carter N.M."/>
            <person name="Choi S.-K."/>
            <person name="Codani J.-J."/>
            <person name="Connerton I.F."/>
            <person name="Cummings N.J."/>
            <person name="Daniel R.A."/>
            <person name="Denizot F."/>
            <person name="Devine K.M."/>
            <person name="Duesterhoeft A."/>
            <person name="Ehrlich S.D."/>
            <person name="Emmerson P.T."/>
            <person name="Entian K.-D."/>
            <person name="Errington J."/>
            <person name="Fabret C."/>
            <person name="Ferrari E."/>
            <person name="Foulger D."/>
            <person name="Fritz C."/>
            <person name="Fujita M."/>
            <person name="Fujita Y."/>
            <person name="Fuma S."/>
            <person name="Galizzi A."/>
            <person name="Galleron N."/>
            <person name="Ghim S.-Y."/>
            <person name="Glaser P."/>
            <person name="Goffeau A."/>
            <person name="Golightly E.J."/>
            <person name="Grandi G."/>
            <person name="Guiseppi G."/>
            <person name="Guy B.J."/>
            <person name="Haga K."/>
            <person name="Haiech J."/>
            <person name="Harwood C.R."/>
            <person name="Henaut A."/>
            <person name="Hilbert H."/>
            <person name="Holsappel S."/>
            <person name="Hosono S."/>
            <person name="Hullo M.-F."/>
            <person name="Itaya M."/>
            <person name="Jones L.-M."/>
            <person name="Joris B."/>
            <person name="Karamata D."/>
            <person name="Kasahara Y."/>
            <person name="Klaerr-Blanchard M."/>
            <person name="Klein C."/>
            <person name="Kobayashi Y."/>
            <person name="Koetter P."/>
            <person name="Koningstein G."/>
            <person name="Krogh S."/>
            <person name="Kumano M."/>
            <person name="Kurita K."/>
            <person name="Lapidus A."/>
            <person name="Lardinois S."/>
            <person name="Lauber J."/>
            <person name="Lazarevic V."/>
            <person name="Lee S.-M."/>
            <person name="Levine A."/>
            <person name="Liu H."/>
            <person name="Masuda S."/>
            <person name="Mauel C."/>
            <person name="Medigue C."/>
            <person name="Medina N."/>
            <person name="Mellado R.P."/>
            <person name="Mizuno M."/>
            <person name="Moestl D."/>
            <person name="Nakai S."/>
            <person name="Noback M."/>
            <person name="Noone D."/>
            <person name="O'Reilly M."/>
            <person name="Ogawa K."/>
            <person name="Ogiwara A."/>
            <person name="Oudega B."/>
            <person name="Park S.-H."/>
            <person name="Parro V."/>
            <person name="Pohl T.M."/>
            <person name="Portetelle D."/>
            <person name="Porwollik S."/>
            <person name="Prescott A.M."/>
            <person name="Presecan E."/>
            <person name="Pujic P."/>
            <person name="Purnelle B."/>
            <person name="Rapoport G."/>
            <person name="Rey M."/>
            <person name="Reynolds S."/>
            <person name="Rieger M."/>
            <person name="Rivolta C."/>
            <person name="Rocha E."/>
            <person name="Roche B."/>
            <person name="Rose M."/>
            <person name="Sadaie Y."/>
            <person name="Sato T."/>
            <person name="Scanlan E."/>
            <person name="Schleich S."/>
            <person name="Schroeter R."/>
            <person name="Scoffone F."/>
            <person name="Sekiguchi J."/>
            <person name="Sekowska A."/>
            <person name="Seror S.J."/>
            <person name="Serror P."/>
            <person name="Shin B.-S."/>
            <person name="Soldo B."/>
            <person name="Sorokin A."/>
            <person name="Tacconi E."/>
            <person name="Takagi T."/>
            <person name="Takahashi H."/>
            <person name="Takemaru K."/>
            <person name="Takeuchi M."/>
            <person name="Tamakoshi A."/>
            <person name="Tanaka T."/>
            <person name="Terpstra P."/>
            <person name="Tognoni A."/>
            <person name="Tosato V."/>
            <person name="Uchiyama S."/>
            <person name="Vandenbol M."/>
            <person name="Vannier F."/>
            <person name="Vassarotti A."/>
            <person name="Viari A."/>
            <person name="Wambutt R."/>
            <person name="Wedler E."/>
            <person name="Wedler H."/>
            <person name="Weitzenegger T."/>
            <person name="Winters P."/>
            <person name="Wipat A."/>
            <person name="Yamamoto H."/>
            <person name="Yamane K."/>
            <person name="Yasumoto K."/>
            <person name="Yata K."/>
            <person name="Yoshida K."/>
            <person name="Yoshikawa H.-F."/>
            <person name="Zumstein E."/>
            <person name="Yoshikawa H."/>
            <person name="Danchin A."/>
        </authorList>
    </citation>
    <scope>NUCLEOTIDE SEQUENCE [LARGE SCALE GENOMIC DNA]</scope>
    <source>
        <strain>168</strain>
    </source>
</reference>
<organism>
    <name type="scientific">Bacillus subtilis (strain 168)</name>
    <dbReference type="NCBI Taxonomy" id="224308"/>
    <lineage>
        <taxon>Bacteria</taxon>
        <taxon>Bacillati</taxon>
        <taxon>Bacillota</taxon>
        <taxon>Bacilli</taxon>
        <taxon>Bacillales</taxon>
        <taxon>Bacillaceae</taxon>
        <taxon>Bacillus</taxon>
    </lineage>
</organism>
<dbReference type="EMBL" id="AB001488">
    <property type="protein sequence ID" value="BAA19345.1"/>
    <property type="molecule type" value="Genomic_DNA"/>
</dbReference>
<dbReference type="EMBL" id="AL009126">
    <property type="protein sequence ID" value="CAB12316.1"/>
    <property type="molecule type" value="Genomic_DNA"/>
</dbReference>
<dbReference type="PIR" id="A69777">
    <property type="entry name" value="A69777"/>
</dbReference>
<dbReference type="RefSeq" id="NP_388390.1">
    <property type="nucleotide sequence ID" value="NC_000964.3"/>
</dbReference>
<dbReference type="RefSeq" id="WP_003234253.1">
    <property type="nucleotide sequence ID" value="NZ_OZ025638.1"/>
</dbReference>
<dbReference type="SMR" id="P96656"/>
<dbReference type="FunCoup" id="P96656">
    <property type="interactions" value="154"/>
</dbReference>
<dbReference type="STRING" id="224308.BSU05090"/>
<dbReference type="PaxDb" id="224308-BSU05090"/>
<dbReference type="EnsemblBacteria" id="CAB12316">
    <property type="protein sequence ID" value="CAB12316"/>
    <property type="gene ID" value="BSU_05090"/>
</dbReference>
<dbReference type="GeneID" id="938128"/>
<dbReference type="KEGG" id="bsu:BSU05090"/>
<dbReference type="PATRIC" id="fig|224308.179.peg.540"/>
<dbReference type="eggNOG" id="COG2814">
    <property type="taxonomic scope" value="Bacteria"/>
</dbReference>
<dbReference type="InParanoid" id="P96656"/>
<dbReference type="OrthoDB" id="9776171at2"/>
<dbReference type="PhylomeDB" id="P96656"/>
<dbReference type="BioCyc" id="BSUB:BSU05090-MONOMER"/>
<dbReference type="Proteomes" id="UP000001570">
    <property type="component" value="Chromosome"/>
</dbReference>
<dbReference type="GO" id="GO:0005886">
    <property type="term" value="C:plasma membrane"/>
    <property type="evidence" value="ECO:0007669"/>
    <property type="project" value="UniProtKB-SubCell"/>
</dbReference>
<dbReference type="GO" id="GO:0022857">
    <property type="term" value="F:transmembrane transporter activity"/>
    <property type="evidence" value="ECO:0007669"/>
    <property type="project" value="InterPro"/>
</dbReference>
<dbReference type="CDD" id="cd17489">
    <property type="entry name" value="MFS_YfcJ_like"/>
    <property type="match status" value="1"/>
</dbReference>
<dbReference type="Gene3D" id="1.20.1250.20">
    <property type="entry name" value="MFS general substrate transporter like domains"/>
    <property type="match status" value="1"/>
</dbReference>
<dbReference type="InterPro" id="IPR011701">
    <property type="entry name" value="MFS"/>
</dbReference>
<dbReference type="InterPro" id="IPR020846">
    <property type="entry name" value="MFS_dom"/>
</dbReference>
<dbReference type="InterPro" id="IPR036259">
    <property type="entry name" value="MFS_trans_sf"/>
</dbReference>
<dbReference type="PANTHER" id="PTHR23534:SF1">
    <property type="entry name" value="MAJOR FACILITATOR SUPERFAMILY PROTEIN"/>
    <property type="match status" value="1"/>
</dbReference>
<dbReference type="PANTHER" id="PTHR23534">
    <property type="entry name" value="MFS PERMEASE"/>
    <property type="match status" value="1"/>
</dbReference>
<dbReference type="Pfam" id="PF07690">
    <property type="entry name" value="MFS_1"/>
    <property type="match status" value="1"/>
</dbReference>
<dbReference type="SUPFAM" id="SSF103473">
    <property type="entry name" value="MFS general substrate transporter"/>
    <property type="match status" value="1"/>
</dbReference>
<dbReference type="PROSITE" id="PS50850">
    <property type="entry name" value="MFS"/>
    <property type="match status" value="1"/>
</dbReference>
<accession>P96656</accession>
<accession>Q797J1</accession>
<gene>
    <name type="primary">yddS</name>
    <name type="ordered locus">BSU05090</name>
</gene>
<comment type="subcellular location">
    <subcellularLocation>
        <location evidence="2">Cell membrane</location>
        <topology evidence="2">Multi-pass membrane protein</topology>
    </subcellularLocation>
</comment>
<comment type="similarity">
    <text evidence="2">Belongs to the major facilitator superfamily.</text>
</comment>
<protein>
    <recommendedName>
        <fullName>Uncharacterized MFS-type transporter YddS</fullName>
    </recommendedName>
</protein>
<sequence length="436" mass="44838">MVMTKKDTNISTQQPLWLQGYIDSPEKQNQLYKKTLKILIFSQIFGGAGLGAGITVGALLAQDMIGSENVAGIPTALFTFGSAVAALLIGASSQRFGRRAGLAGGFLIGGLGAIGVIIAALINSVALLFVSLLIYGAGMASNLQVRYAGTDLANEKQRATAASMALVSTTLGAVVGPNLVNTMGEFADSIGVPNLAGPFIMSGAAFIIAGIILLIFLRPDPLFVSTAIANAEKKDDKVQIGGSLKNPAIDKKGIMVGAVIMILAQLIMTAIMTMTPVHMGHHGHGLSEVGLVIGLHIAAMYLPSPLTGLLVDKFGRTTMAIASGATLLAAGLVAAIAPADSLSLLILALVLLGVGWNFGLLTGTALIIDSTHPSLRAKTQGTFDVLLALSGAAGGALSGMVVAHSSYTILSISGAVLSLLLIPVVIWYFRRIQEKA</sequence>